<gene>
    <name evidence="1" type="primary">atpC</name>
    <name type="ordered locus">CJJ81176_0143</name>
</gene>
<feature type="chain" id="PRO_1000056471" description="ATP synthase epsilon chain">
    <location>
        <begin position="1"/>
        <end position="129"/>
    </location>
</feature>
<proteinExistence type="inferred from homology"/>
<name>ATPE_CAMJJ</name>
<comment type="function">
    <text evidence="1">Produces ATP from ADP in the presence of a proton gradient across the membrane.</text>
</comment>
<comment type="subunit">
    <text evidence="1">F-type ATPases have 2 components, CF(1) - the catalytic core - and CF(0) - the membrane proton channel. CF(1) has five subunits: alpha(3), beta(3), gamma(1), delta(1), epsilon(1). CF(0) has three main subunits: a, b and c.</text>
</comment>
<comment type="subcellular location">
    <subcellularLocation>
        <location evidence="1">Cell inner membrane</location>
        <topology evidence="1">Peripheral membrane protein</topology>
    </subcellularLocation>
</comment>
<comment type="similarity">
    <text evidence="1">Belongs to the ATPase epsilon chain family.</text>
</comment>
<dbReference type="EMBL" id="CP000538">
    <property type="protein sequence ID" value="EAQ71973.1"/>
    <property type="molecule type" value="Genomic_DNA"/>
</dbReference>
<dbReference type="RefSeq" id="WP_002851752.1">
    <property type="nucleotide sequence ID" value="NC_008787.1"/>
</dbReference>
<dbReference type="SMR" id="A1VXJ1"/>
<dbReference type="KEGG" id="cjj:CJJ81176_0143"/>
<dbReference type="eggNOG" id="COG0355">
    <property type="taxonomic scope" value="Bacteria"/>
</dbReference>
<dbReference type="HOGENOM" id="CLU_084338_2_1_7"/>
<dbReference type="Proteomes" id="UP000000646">
    <property type="component" value="Chromosome"/>
</dbReference>
<dbReference type="GO" id="GO:0005886">
    <property type="term" value="C:plasma membrane"/>
    <property type="evidence" value="ECO:0007669"/>
    <property type="project" value="UniProtKB-SubCell"/>
</dbReference>
<dbReference type="GO" id="GO:0045259">
    <property type="term" value="C:proton-transporting ATP synthase complex"/>
    <property type="evidence" value="ECO:0007669"/>
    <property type="project" value="UniProtKB-KW"/>
</dbReference>
<dbReference type="GO" id="GO:0005524">
    <property type="term" value="F:ATP binding"/>
    <property type="evidence" value="ECO:0007669"/>
    <property type="project" value="UniProtKB-UniRule"/>
</dbReference>
<dbReference type="GO" id="GO:0046933">
    <property type="term" value="F:proton-transporting ATP synthase activity, rotational mechanism"/>
    <property type="evidence" value="ECO:0007669"/>
    <property type="project" value="UniProtKB-UniRule"/>
</dbReference>
<dbReference type="CDD" id="cd12152">
    <property type="entry name" value="F1-ATPase_delta"/>
    <property type="match status" value="1"/>
</dbReference>
<dbReference type="Gene3D" id="2.60.15.10">
    <property type="entry name" value="F0F1 ATP synthase delta/epsilon subunit, N-terminal"/>
    <property type="match status" value="1"/>
</dbReference>
<dbReference type="HAMAP" id="MF_00530">
    <property type="entry name" value="ATP_synth_epsil_bac"/>
    <property type="match status" value="1"/>
</dbReference>
<dbReference type="InterPro" id="IPR001469">
    <property type="entry name" value="ATP_synth_F1_dsu/esu"/>
</dbReference>
<dbReference type="InterPro" id="IPR020546">
    <property type="entry name" value="ATP_synth_F1_dsu/esu_N"/>
</dbReference>
<dbReference type="InterPro" id="IPR036771">
    <property type="entry name" value="ATPsynth_dsu/esu_N"/>
</dbReference>
<dbReference type="NCBIfam" id="TIGR01216">
    <property type="entry name" value="ATP_synt_epsi"/>
    <property type="match status" value="1"/>
</dbReference>
<dbReference type="PANTHER" id="PTHR13822">
    <property type="entry name" value="ATP SYNTHASE DELTA/EPSILON CHAIN"/>
    <property type="match status" value="1"/>
</dbReference>
<dbReference type="PANTHER" id="PTHR13822:SF10">
    <property type="entry name" value="ATP SYNTHASE EPSILON CHAIN, CHLOROPLASTIC"/>
    <property type="match status" value="1"/>
</dbReference>
<dbReference type="Pfam" id="PF02823">
    <property type="entry name" value="ATP-synt_DE_N"/>
    <property type="match status" value="1"/>
</dbReference>
<dbReference type="SUPFAM" id="SSF51344">
    <property type="entry name" value="Epsilon subunit of F1F0-ATP synthase N-terminal domain"/>
    <property type="match status" value="1"/>
</dbReference>
<reference key="1">
    <citation type="submission" date="2006-12" db="EMBL/GenBank/DDBJ databases">
        <authorList>
            <person name="Fouts D.E."/>
            <person name="Nelson K.E."/>
            <person name="Sebastian Y."/>
        </authorList>
    </citation>
    <scope>NUCLEOTIDE SEQUENCE [LARGE SCALE GENOMIC DNA]</scope>
    <source>
        <strain>81-176</strain>
    </source>
</reference>
<accession>A1VXJ1</accession>
<sequence length="129" mass="13692">MNDLINFEIVTPLGVIYQGEVKSVTLPGSEGEFGVLKGHAALVSSLKSGVIDIEKADLNHELIAIDAGHAKVDEDKICVLAKGAVWVCGSDESEIEKNLAQAKDLIKSMSSDNAALAATFSKLDNARMH</sequence>
<protein>
    <recommendedName>
        <fullName evidence="1">ATP synthase epsilon chain</fullName>
    </recommendedName>
    <alternativeName>
        <fullName evidence="1">ATP synthase F1 sector epsilon subunit</fullName>
    </alternativeName>
    <alternativeName>
        <fullName evidence="1">F-ATPase epsilon subunit</fullName>
    </alternativeName>
</protein>
<organism>
    <name type="scientific">Campylobacter jejuni subsp. jejuni serotype O:23/36 (strain 81-176)</name>
    <dbReference type="NCBI Taxonomy" id="354242"/>
    <lineage>
        <taxon>Bacteria</taxon>
        <taxon>Pseudomonadati</taxon>
        <taxon>Campylobacterota</taxon>
        <taxon>Epsilonproteobacteria</taxon>
        <taxon>Campylobacterales</taxon>
        <taxon>Campylobacteraceae</taxon>
        <taxon>Campylobacter</taxon>
    </lineage>
</organism>
<evidence type="ECO:0000255" key="1">
    <source>
        <dbReference type="HAMAP-Rule" id="MF_00530"/>
    </source>
</evidence>
<keyword id="KW-0066">ATP synthesis</keyword>
<keyword id="KW-0997">Cell inner membrane</keyword>
<keyword id="KW-1003">Cell membrane</keyword>
<keyword id="KW-0139">CF(1)</keyword>
<keyword id="KW-0375">Hydrogen ion transport</keyword>
<keyword id="KW-0406">Ion transport</keyword>
<keyword id="KW-0472">Membrane</keyword>
<keyword id="KW-0813">Transport</keyword>